<gene>
    <name type="ORF">FV3-006R</name>
</gene>
<reference key="1">
    <citation type="journal article" date="2004" name="Virology">
        <title>Comparative genomic analyses of frog virus 3, type species of the genus Ranavirus (family Iridoviridae).</title>
        <authorList>
            <person name="Tan W.G."/>
            <person name="Barkman T.J."/>
            <person name="Gregory Chinchar V."/>
            <person name="Essani K."/>
        </authorList>
    </citation>
    <scope>NUCLEOTIDE SEQUENCE [LARGE SCALE GENOMIC DNA]</scope>
</reference>
<organismHost>
    <name type="scientific">Dryophytes versicolor</name>
    <name type="common">chameleon treefrog</name>
    <dbReference type="NCBI Taxonomy" id="30343"/>
</organismHost>
<organismHost>
    <name type="scientific">Lithobates pipiens</name>
    <name type="common">Northern leopard frog</name>
    <name type="synonym">Rana pipiens</name>
    <dbReference type="NCBI Taxonomy" id="8404"/>
</organismHost>
<organismHost>
    <name type="scientific">Lithobates sylvaticus</name>
    <name type="common">Wood frog</name>
    <name type="synonym">Rana sylvatica</name>
    <dbReference type="NCBI Taxonomy" id="45438"/>
</organismHost>
<organismHost>
    <name type="scientific">Notophthalmus viridescens</name>
    <name type="common">Eastern newt</name>
    <name type="synonym">Triturus viridescens</name>
    <dbReference type="NCBI Taxonomy" id="8316"/>
</organismHost>
<sequence length="75" mass="8848">MYKMYFLKDQKFSLSGTIRINDKTQSEYGSVWCPGLSITGLHHDAIDHNMFEEMETEIIEYLGPWVQAEYRRIKG</sequence>
<protein>
    <recommendedName>
        <fullName>Uncharacterized protein 006R</fullName>
    </recommendedName>
</protein>
<proteinExistence type="predicted"/>
<feature type="chain" id="PRO_0000410535" description="Uncharacterized protein 006R">
    <location>
        <begin position="1"/>
        <end position="75"/>
    </location>
</feature>
<keyword id="KW-1185">Reference proteome</keyword>
<name>006R_FRG3G</name>
<organism>
    <name type="scientific">Frog virus 3 (isolate Goorha)</name>
    <name type="common">FV-3</name>
    <dbReference type="NCBI Taxonomy" id="654924"/>
    <lineage>
        <taxon>Viruses</taxon>
        <taxon>Varidnaviria</taxon>
        <taxon>Bamfordvirae</taxon>
        <taxon>Nucleocytoviricota</taxon>
        <taxon>Megaviricetes</taxon>
        <taxon>Pimascovirales</taxon>
        <taxon>Iridoviridae</taxon>
        <taxon>Alphairidovirinae</taxon>
        <taxon>Ranavirus</taxon>
        <taxon>Frog virus 3</taxon>
    </lineage>
</organism>
<dbReference type="EMBL" id="AY548484">
    <property type="protein sequence ID" value="AAT09665.1"/>
    <property type="molecule type" value="Genomic_DNA"/>
</dbReference>
<dbReference type="RefSeq" id="YP_031584.1">
    <property type="nucleotide sequence ID" value="NC_005946.1"/>
</dbReference>
<dbReference type="KEGG" id="vg:2947778"/>
<dbReference type="Proteomes" id="UP000008770">
    <property type="component" value="Segment"/>
</dbReference>
<accession>Q6GZW9</accession>